<reference key="1">
    <citation type="journal article" date="1999" name="DNA Res.">
        <title>Prediction of the coding sequences of unidentified human genes. XV. The complete sequences of 100 new cDNA clones from brain which code for large proteins in vitro.</title>
        <authorList>
            <person name="Nagase T."/>
            <person name="Ishikawa K."/>
            <person name="Kikuno R."/>
            <person name="Hirosawa M."/>
            <person name="Nomura N."/>
            <person name="Ohara O."/>
        </authorList>
    </citation>
    <scope>NUCLEOTIDE SEQUENCE [LARGE SCALE MRNA]</scope>
    <scope>VARIANT SER-803</scope>
    <source>
        <tissue>Brain</tissue>
    </source>
</reference>
<reference key="2">
    <citation type="journal article" date="2006" name="Nature">
        <title>The DNA sequence, annotation and analysis of human chromosome 3.</title>
        <authorList>
            <person name="Muzny D.M."/>
            <person name="Scherer S.E."/>
            <person name="Kaul R."/>
            <person name="Wang J."/>
            <person name="Yu J."/>
            <person name="Sudbrak R."/>
            <person name="Buhay C.J."/>
            <person name="Chen R."/>
            <person name="Cree A."/>
            <person name="Ding Y."/>
            <person name="Dugan-Rocha S."/>
            <person name="Gill R."/>
            <person name="Gunaratne P."/>
            <person name="Harris R.A."/>
            <person name="Hawes A.C."/>
            <person name="Hernandez J."/>
            <person name="Hodgson A.V."/>
            <person name="Hume J."/>
            <person name="Jackson A."/>
            <person name="Khan Z.M."/>
            <person name="Kovar-Smith C."/>
            <person name="Lewis L.R."/>
            <person name="Lozado R.J."/>
            <person name="Metzker M.L."/>
            <person name="Milosavljevic A."/>
            <person name="Miner G.R."/>
            <person name="Morgan M.B."/>
            <person name="Nazareth L.V."/>
            <person name="Scott G."/>
            <person name="Sodergren E."/>
            <person name="Song X.-Z."/>
            <person name="Steffen D."/>
            <person name="Wei S."/>
            <person name="Wheeler D.A."/>
            <person name="Wright M.W."/>
            <person name="Worley K.C."/>
            <person name="Yuan Y."/>
            <person name="Zhang Z."/>
            <person name="Adams C.Q."/>
            <person name="Ansari-Lari M.A."/>
            <person name="Ayele M."/>
            <person name="Brown M.J."/>
            <person name="Chen G."/>
            <person name="Chen Z."/>
            <person name="Clendenning J."/>
            <person name="Clerc-Blankenburg K.P."/>
            <person name="Chen R."/>
            <person name="Chen Z."/>
            <person name="Davis C."/>
            <person name="Delgado O."/>
            <person name="Dinh H.H."/>
            <person name="Dong W."/>
            <person name="Draper H."/>
            <person name="Ernst S."/>
            <person name="Fu G."/>
            <person name="Gonzalez-Garay M.L."/>
            <person name="Garcia D.K."/>
            <person name="Gillett W."/>
            <person name="Gu J."/>
            <person name="Hao B."/>
            <person name="Haugen E."/>
            <person name="Havlak P."/>
            <person name="He X."/>
            <person name="Hennig S."/>
            <person name="Hu S."/>
            <person name="Huang W."/>
            <person name="Jackson L.R."/>
            <person name="Jacob L.S."/>
            <person name="Kelly S.H."/>
            <person name="Kube M."/>
            <person name="Levy R."/>
            <person name="Li Z."/>
            <person name="Liu B."/>
            <person name="Liu J."/>
            <person name="Liu W."/>
            <person name="Lu J."/>
            <person name="Maheshwari M."/>
            <person name="Nguyen B.-V."/>
            <person name="Okwuonu G.O."/>
            <person name="Palmeiri A."/>
            <person name="Pasternak S."/>
            <person name="Perez L.M."/>
            <person name="Phelps K.A."/>
            <person name="Plopper F.J."/>
            <person name="Qiang B."/>
            <person name="Raymond C."/>
            <person name="Rodriguez R."/>
            <person name="Saenphimmachak C."/>
            <person name="Santibanez J."/>
            <person name="Shen H."/>
            <person name="Shen Y."/>
            <person name="Subramanian S."/>
            <person name="Tabor P.E."/>
            <person name="Verduzco D."/>
            <person name="Waldron L."/>
            <person name="Wang J."/>
            <person name="Wang J."/>
            <person name="Wang Q."/>
            <person name="Williams G.A."/>
            <person name="Wong G.K.-S."/>
            <person name="Yao Z."/>
            <person name="Zhang J."/>
            <person name="Zhang X."/>
            <person name="Zhao G."/>
            <person name="Zhou J."/>
            <person name="Zhou Y."/>
            <person name="Nelson D."/>
            <person name="Lehrach H."/>
            <person name="Reinhardt R."/>
            <person name="Naylor S.L."/>
            <person name="Yang H."/>
            <person name="Olson M."/>
            <person name="Weinstock G."/>
            <person name="Gibbs R.A."/>
        </authorList>
    </citation>
    <scope>NUCLEOTIDE SEQUENCE [LARGE SCALE GENOMIC DNA]</scope>
</reference>
<reference key="3">
    <citation type="journal article" date="2004" name="Genome Res.">
        <title>The status, quality, and expansion of the NIH full-length cDNA project: the Mammalian Gene Collection (MGC).</title>
        <authorList>
            <consortium name="The MGC Project Team"/>
        </authorList>
    </citation>
    <scope>NUCLEOTIDE SEQUENCE [LARGE SCALE MRNA]</scope>
    <scope>VARIANT SER-803</scope>
    <source>
        <tissue>Brain</tissue>
    </source>
</reference>
<reference key="4">
    <citation type="journal article" date="2002" name="Mol. Cell. Biol.">
        <title>Activation of rac and cdc42 video imaged by fluorescent resonance energy transfer-based single-molecule probes in the membrane of living cells.</title>
        <authorList>
            <person name="Itoh R.E."/>
            <person name="Kurokawa K."/>
            <person name="Ohba Y."/>
            <person name="Yoshizaki H."/>
            <person name="Mochizuki N."/>
            <person name="Matsuda M."/>
        </authorList>
    </citation>
    <scope>FUNCTION</scope>
</reference>
<reference key="5">
    <citation type="journal article" date="2006" name="Biol. Cell">
        <title>The human orthologue of CdGAP is a phosphoprotein and a GTPase-activating protein for Cdc42 and Rac1 but not RhoA.</title>
        <authorList>
            <person name="Tcherkezian J."/>
            <person name="Triki I."/>
            <person name="Stenne R."/>
            <person name="Danek E.I."/>
            <person name="Lamarche-Vane N."/>
        </authorList>
    </citation>
    <scope>IDENTIFICATION</scope>
    <scope>TISSUE SPECIFICITY</scope>
    <scope>PHOSPHORYLATION</scope>
    <scope>FUNCTION</scope>
</reference>
<reference key="6">
    <citation type="journal article" date="2011" name="Am. J. Hum. Genet.">
        <title>Gain-of-function mutations of ARHGAP31, a Cdc42/Rac1 GTPase regulator, cause syndromic cutis aplasia and limb anomalies.</title>
        <authorList>
            <person name="Southgate L."/>
            <person name="Machado R.D."/>
            <person name="Snape K.M."/>
            <person name="Primeau M."/>
            <person name="Dafou D."/>
            <person name="Ruddy D.M."/>
            <person name="Branney P.A."/>
            <person name="Fisher M."/>
            <person name="Lee G.J."/>
            <person name="Simpson M.A."/>
            <person name="He Y."/>
            <person name="Bradshaw T.Y."/>
            <person name="Blaumeiser B."/>
            <person name="Winship W.S."/>
            <person name="Reardon W."/>
            <person name="Maher E.R."/>
            <person name="FitzPatrick D.R."/>
            <person name="Wuyts W."/>
            <person name="Zenker M."/>
            <person name="Lamarche-Vane N."/>
            <person name="Trembath R.C."/>
        </authorList>
    </citation>
    <scope>INVOLVEMENT IN AOS1</scope>
    <scope>VARIANT ILE-727</scope>
</reference>
<reference key="7">
    <citation type="journal article" date="2011" name="Biochem. Biophys. Res. Commun.">
        <title>ARHGAP30 is a Wrch-1-interacting protein involved in actin dynamics and cell adhesion.</title>
        <authorList>
            <person name="Naji L."/>
            <person name="Pacholsky D."/>
            <person name="Aspenstrom P."/>
        </authorList>
    </citation>
    <scope>INTERACTION WITH RHOU</scope>
</reference>
<reference key="8">
    <citation type="journal article" date="2014" name="J. Proteomics">
        <title>An enzyme assisted RP-RPLC approach for in-depth analysis of human liver phosphoproteome.</title>
        <authorList>
            <person name="Bian Y."/>
            <person name="Song C."/>
            <person name="Cheng K."/>
            <person name="Dong M."/>
            <person name="Wang F."/>
            <person name="Huang J."/>
            <person name="Sun D."/>
            <person name="Wang L."/>
            <person name="Ye M."/>
            <person name="Zou H."/>
        </authorList>
    </citation>
    <scope>IDENTIFICATION BY MASS SPECTROMETRY [LARGE SCALE ANALYSIS]</scope>
    <source>
        <tissue>Liver</tissue>
    </source>
</reference>
<comment type="function">
    <text evidence="6 8">Functions as a GTPase-activating protein (GAP) for RAC1 and CDC42. Required for cell spreading, polarized lamellipodia formation and cell migration.</text>
</comment>
<comment type="subunit">
    <text evidence="1 9">Interacts with ITSN1, which inhibits GAP activity. Interacts with PARVA (By similarity). Interacts with GTP-loaded RHOU.</text>
</comment>
<comment type="interaction">
    <interactant intactId="EBI-2803146">
        <id>Q2M1Z3</id>
    </interactant>
    <interactant intactId="EBI-2462036">
        <id>Q9Y490</id>
        <label>TLN1</label>
    </interactant>
    <organismsDiffer>false</organismsDiffer>
    <experiments>2</experiments>
</comment>
<comment type="subcellular location">
    <subcellularLocation>
        <location>Cell projection</location>
        <location>Lamellipodium</location>
    </subcellularLocation>
    <subcellularLocation>
        <location evidence="1">Cell junction</location>
        <location evidence="1">Focal adhesion</location>
    </subcellularLocation>
</comment>
<comment type="developmental stage">
    <text>Mainly expressed in fetal heart and muscle.</text>
</comment>
<comment type="PTM">
    <text evidence="1">Phosphorylation on Thr-789 reduces GAP activity.</text>
</comment>
<comment type="disease" evidence="10">
    <disease id="DI-03194">
        <name>Adams-Oliver syndrome 1</name>
        <acronym>AOS1</acronym>
        <description>A disorder characterized by the congenital absence of skin (aplasia cutis congenita) in combination with transverse limb defects. Aplasia cutis congenita can be located anywhere on the body, but in the vast majority of the cases, it is present on the posterior parietal region where it is often associated with an underlying defect of the parietal bones. Limb abnormalities are typically limb truncation defects affecting the distal phalanges or entire digits (true ectrodactyly). Only rarely, metatarsals/metacarpals or more proximal limb structures are also affected. Apart from transverse limb defects, syndactyly, most commonly of second and third toes, can also be observed. The clinical features are highly variable and can also include cardiovascular malformations, brain abnormalities and vascular defects such as cutis marmorata and dilated scalp veins.</description>
        <dbReference type="MIM" id="100300"/>
    </disease>
    <text>The disease is caused by variants affecting the gene represented in this entry.</text>
</comment>
<comment type="sequence caution" evidence="11">
    <conflict type="erroneous initiation">
        <sequence resource="EMBL-CDS" id="BAA86518"/>
    </conflict>
    <text>Extended N-terminus.</text>
</comment>
<accession>Q2M1Z3</accession>
<accession>Q9ULL6</accession>
<dbReference type="EMBL" id="AB033030">
    <property type="protein sequence ID" value="BAA86518.1"/>
    <property type="status" value="ALT_INIT"/>
    <property type="molecule type" value="mRNA"/>
</dbReference>
<dbReference type="EMBL" id="AC092981">
    <property type="status" value="NOT_ANNOTATED_CDS"/>
    <property type="molecule type" value="Genomic_DNA"/>
</dbReference>
<dbReference type="EMBL" id="BC112163">
    <property type="protein sequence ID" value="AAI12164.1"/>
    <property type="molecule type" value="mRNA"/>
</dbReference>
<dbReference type="EMBL" id="BC112165">
    <property type="protein sequence ID" value="AAI12166.1"/>
    <property type="molecule type" value="mRNA"/>
</dbReference>
<dbReference type="CCDS" id="CCDS43135.1"/>
<dbReference type="PIR" id="A59437">
    <property type="entry name" value="A59437"/>
</dbReference>
<dbReference type="RefSeq" id="NP_065805.2">
    <property type="nucleotide sequence ID" value="NM_020754.4"/>
</dbReference>
<dbReference type="SMR" id="Q2M1Z3"/>
<dbReference type="BioGRID" id="121578">
    <property type="interactions" value="46"/>
</dbReference>
<dbReference type="FunCoup" id="Q2M1Z3">
    <property type="interactions" value="500"/>
</dbReference>
<dbReference type="IntAct" id="Q2M1Z3">
    <property type="interactions" value="22"/>
</dbReference>
<dbReference type="MINT" id="Q2M1Z3"/>
<dbReference type="STRING" id="9606.ENSP00000264245"/>
<dbReference type="GlyGen" id="Q2M1Z3">
    <property type="glycosylation" value="2 sites, 1 O-linked glycan (1 site)"/>
</dbReference>
<dbReference type="iPTMnet" id="Q2M1Z3"/>
<dbReference type="PhosphoSitePlus" id="Q2M1Z3"/>
<dbReference type="BioMuta" id="ARHGAP31"/>
<dbReference type="DMDM" id="296452881"/>
<dbReference type="jPOST" id="Q2M1Z3"/>
<dbReference type="MassIVE" id="Q2M1Z3"/>
<dbReference type="PaxDb" id="9606-ENSP00000264245"/>
<dbReference type="PeptideAtlas" id="Q2M1Z3"/>
<dbReference type="ProteomicsDB" id="61343"/>
<dbReference type="Antibodypedia" id="49897">
    <property type="antibodies" value="38 antibodies from 16 providers"/>
</dbReference>
<dbReference type="DNASU" id="57514"/>
<dbReference type="Ensembl" id="ENST00000264245.9">
    <property type="protein sequence ID" value="ENSP00000264245.4"/>
    <property type="gene ID" value="ENSG00000031081.11"/>
</dbReference>
<dbReference type="GeneID" id="57514"/>
<dbReference type="KEGG" id="hsa:57514"/>
<dbReference type="MANE-Select" id="ENST00000264245.9">
    <property type="protein sequence ID" value="ENSP00000264245.4"/>
    <property type="RefSeq nucleotide sequence ID" value="NM_020754.4"/>
    <property type="RefSeq protein sequence ID" value="NP_065805.2"/>
</dbReference>
<dbReference type="UCSC" id="uc003ecj.5">
    <property type="organism name" value="human"/>
</dbReference>
<dbReference type="AGR" id="HGNC:29216"/>
<dbReference type="CTD" id="57514"/>
<dbReference type="DisGeNET" id="57514"/>
<dbReference type="GeneCards" id="ARHGAP31"/>
<dbReference type="HGNC" id="HGNC:29216">
    <property type="gene designation" value="ARHGAP31"/>
</dbReference>
<dbReference type="HPA" id="ENSG00000031081">
    <property type="expression patterns" value="Low tissue specificity"/>
</dbReference>
<dbReference type="MalaCards" id="ARHGAP31"/>
<dbReference type="MIM" id="100300">
    <property type="type" value="phenotype"/>
</dbReference>
<dbReference type="MIM" id="610911">
    <property type="type" value="gene"/>
</dbReference>
<dbReference type="neXtProt" id="NX_Q2M1Z3"/>
<dbReference type="OpenTargets" id="ENSG00000031081"/>
<dbReference type="Orphanet" id="974">
    <property type="disease" value="Adams-Oliver syndrome"/>
</dbReference>
<dbReference type="PharmGKB" id="PA165696843"/>
<dbReference type="VEuPathDB" id="HostDB:ENSG00000031081"/>
<dbReference type="eggNOG" id="KOG1449">
    <property type="taxonomic scope" value="Eukaryota"/>
</dbReference>
<dbReference type="GeneTree" id="ENSGT00940000159458"/>
<dbReference type="HOGENOM" id="CLU_006917_0_0_1"/>
<dbReference type="InParanoid" id="Q2M1Z3"/>
<dbReference type="OMA" id="TVMSLWT"/>
<dbReference type="OrthoDB" id="79452at2759"/>
<dbReference type="PAN-GO" id="Q2M1Z3">
    <property type="GO annotations" value="3 GO annotations based on evolutionary models"/>
</dbReference>
<dbReference type="PhylomeDB" id="Q2M1Z3"/>
<dbReference type="TreeFam" id="TF351451"/>
<dbReference type="PathwayCommons" id="Q2M1Z3"/>
<dbReference type="Reactome" id="R-HSA-8980692">
    <property type="pathway name" value="RHOA GTPase cycle"/>
</dbReference>
<dbReference type="Reactome" id="R-HSA-9013148">
    <property type="pathway name" value="CDC42 GTPase cycle"/>
</dbReference>
<dbReference type="Reactome" id="R-HSA-9013149">
    <property type="pathway name" value="RAC1 GTPase cycle"/>
</dbReference>
<dbReference type="Reactome" id="R-HSA-9013420">
    <property type="pathway name" value="RHOU GTPase cycle"/>
</dbReference>
<dbReference type="SignaLink" id="Q2M1Z3"/>
<dbReference type="SIGNOR" id="Q2M1Z3"/>
<dbReference type="BioGRID-ORCS" id="57514">
    <property type="hits" value="17 hits in 1150 CRISPR screens"/>
</dbReference>
<dbReference type="ChiTaRS" id="ARHGAP31">
    <property type="organism name" value="human"/>
</dbReference>
<dbReference type="GeneWiki" id="ARHGAP31"/>
<dbReference type="GenomeRNAi" id="57514"/>
<dbReference type="Pharos" id="Q2M1Z3">
    <property type="development level" value="Tbio"/>
</dbReference>
<dbReference type="PRO" id="PR:Q2M1Z3"/>
<dbReference type="Proteomes" id="UP000005640">
    <property type="component" value="Chromosome 3"/>
</dbReference>
<dbReference type="RNAct" id="Q2M1Z3">
    <property type="molecule type" value="protein"/>
</dbReference>
<dbReference type="Bgee" id="ENSG00000031081">
    <property type="expression patterns" value="Expressed in cardiac muscle of right atrium and 178 other cell types or tissues"/>
</dbReference>
<dbReference type="ExpressionAtlas" id="Q2M1Z3">
    <property type="expression patterns" value="baseline and differential"/>
</dbReference>
<dbReference type="GO" id="GO:0005829">
    <property type="term" value="C:cytosol"/>
    <property type="evidence" value="ECO:0000304"/>
    <property type="project" value="Reactome"/>
</dbReference>
<dbReference type="GO" id="GO:0005925">
    <property type="term" value="C:focal adhesion"/>
    <property type="evidence" value="ECO:0007669"/>
    <property type="project" value="UniProtKB-SubCell"/>
</dbReference>
<dbReference type="GO" id="GO:0030027">
    <property type="term" value="C:lamellipodium"/>
    <property type="evidence" value="ECO:0000318"/>
    <property type="project" value="GO_Central"/>
</dbReference>
<dbReference type="GO" id="GO:0005096">
    <property type="term" value="F:GTPase activator activity"/>
    <property type="evidence" value="ECO:0000318"/>
    <property type="project" value="GO_Central"/>
</dbReference>
<dbReference type="GO" id="GO:0017124">
    <property type="term" value="F:SH3 domain binding"/>
    <property type="evidence" value="ECO:0007669"/>
    <property type="project" value="Ensembl"/>
</dbReference>
<dbReference type="GO" id="GO:0051056">
    <property type="term" value="P:regulation of small GTPase mediated signal transduction"/>
    <property type="evidence" value="ECO:0000304"/>
    <property type="project" value="Reactome"/>
</dbReference>
<dbReference type="GO" id="GO:0007264">
    <property type="term" value="P:small GTPase-mediated signal transduction"/>
    <property type="evidence" value="ECO:0000318"/>
    <property type="project" value="GO_Central"/>
</dbReference>
<dbReference type="CDD" id="cd04384">
    <property type="entry name" value="RhoGAP_CdGAP"/>
    <property type="match status" value="1"/>
</dbReference>
<dbReference type="FunFam" id="1.10.555.10:FF:000002">
    <property type="entry name" value="rho GTPase-activating protein 32 isoform X1"/>
    <property type="match status" value="1"/>
</dbReference>
<dbReference type="Gene3D" id="1.10.555.10">
    <property type="entry name" value="Rho GTPase activation protein"/>
    <property type="match status" value="1"/>
</dbReference>
<dbReference type="InterPro" id="IPR051576">
    <property type="entry name" value="PX-Rho_GAP"/>
</dbReference>
<dbReference type="InterPro" id="IPR008936">
    <property type="entry name" value="Rho_GTPase_activation_prot"/>
</dbReference>
<dbReference type="InterPro" id="IPR000198">
    <property type="entry name" value="RhoGAP_dom"/>
</dbReference>
<dbReference type="PANTHER" id="PTHR15729">
    <property type="entry name" value="CDC42 GTPASE-ACTIVATING PROTEIN"/>
    <property type="match status" value="1"/>
</dbReference>
<dbReference type="PANTHER" id="PTHR15729:SF3">
    <property type="entry name" value="RHO GTPASE-ACTIVATING PROTEIN 31"/>
    <property type="match status" value="1"/>
</dbReference>
<dbReference type="Pfam" id="PF00620">
    <property type="entry name" value="RhoGAP"/>
    <property type="match status" value="1"/>
</dbReference>
<dbReference type="SMART" id="SM00324">
    <property type="entry name" value="RhoGAP"/>
    <property type="match status" value="1"/>
</dbReference>
<dbReference type="SUPFAM" id="SSF48350">
    <property type="entry name" value="GTPase activation domain, GAP"/>
    <property type="match status" value="1"/>
</dbReference>
<dbReference type="PROSITE" id="PS50238">
    <property type="entry name" value="RHOGAP"/>
    <property type="match status" value="1"/>
</dbReference>
<proteinExistence type="evidence at protein level"/>
<evidence type="ECO:0000250" key="1"/>
<evidence type="ECO:0000250" key="2">
    <source>
        <dbReference type="UniProtKB" id="A6X8Z5"/>
    </source>
</evidence>
<evidence type="ECO:0000255" key="3">
    <source>
        <dbReference type="PROSITE-ProRule" id="PRU00172"/>
    </source>
</evidence>
<evidence type="ECO:0000256" key="4">
    <source>
        <dbReference type="SAM" id="MobiDB-lite"/>
    </source>
</evidence>
<evidence type="ECO:0000269" key="5">
    <source>
    </source>
</evidence>
<evidence type="ECO:0000269" key="6">
    <source>
    </source>
</evidence>
<evidence type="ECO:0000269" key="7">
    <source>
    </source>
</evidence>
<evidence type="ECO:0000269" key="8">
    <source>
    </source>
</evidence>
<evidence type="ECO:0000269" key="9">
    <source>
    </source>
</evidence>
<evidence type="ECO:0000269" key="10">
    <source>
    </source>
</evidence>
<evidence type="ECO:0000305" key="11"/>
<name>RHG31_HUMAN</name>
<gene>
    <name type="primary">ARHGAP31</name>
    <name type="synonym">CDGAP</name>
    <name type="synonym">KIAA1204</name>
</gene>
<organism>
    <name type="scientific">Homo sapiens</name>
    <name type="common">Human</name>
    <dbReference type="NCBI Taxonomy" id="9606"/>
    <lineage>
        <taxon>Eukaryota</taxon>
        <taxon>Metazoa</taxon>
        <taxon>Chordata</taxon>
        <taxon>Craniata</taxon>
        <taxon>Vertebrata</taxon>
        <taxon>Euteleostomi</taxon>
        <taxon>Mammalia</taxon>
        <taxon>Eutheria</taxon>
        <taxon>Euarchontoglires</taxon>
        <taxon>Primates</taxon>
        <taxon>Haplorrhini</taxon>
        <taxon>Catarrhini</taxon>
        <taxon>Hominidae</taxon>
        <taxon>Homo</taxon>
    </lineage>
</organism>
<keyword id="KW-0965">Cell junction</keyword>
<keyword id="KW-0966">Cell projection</keyword>
<keyword id="KW-0343">GTPase activation</keyword>
<keyword id="KW-0597">Phosphoprotein</keyword>
<keyword id="KW-1267">Proteomics identification</keyword>
<keyword id="KW-1185">Reference proteome</keyword>
<protein>
    <recommendedName>
        <fullName>Rho GTPase-activating protein 31</fullName>
    </recommendedName>
    <alternativeName>
        <fullName>Cdc42 GTPase-activating protein</fullName>
    </alternativeName>
</protein>
<sequence length="1444" mass="156985">MKNKGAKQKLKRKGAASAFGCDLTEYLESSGQDVPYVLKSCAEFIETHGIVDGIYRLSGVTSNIQRLRQEFGSDQCPDLTREVYLQDIHCVGSLCKLYFRELPNPLLTYELYEKFTEAVSHCPEEGQLARIQNVIQELPPSHYRTLEYLIRHLAHIASFSSKTNMHARNLALVWAPNLLRSKEIEATGCNGDAAFLAVRVQQVVIEFILNHVDQIFNNGAPGSLENDENRPIMKSLTLPALSLPMKLVSLEEAQARSLATNHPARKERRENSLPEIVPPMGTLFHTVLELPDNKRKLSSKSKKWKSIFNLGRSGSDSKSKLSRNGSVFVRGQRLSVEKATIRPAKSMDSLCSVPVEGKETKGNFNRTVTTGGFFIPATKMHSTGTGSSCDLTKQEGEWGQEGMPPGAEGGFDVSSDRSHLQGAQARPPPEQLKVFRPVEDPESEQTAPKMLGMFYTSNDSPSKSVFTSSLFQMEPSPRNQRKALNISEPFAVSVPLRVSAVISTNSTPCRTPPKELQSLSSLEEFSFHGSESGGWPEEEKPLGAETSAASVPKKAGLEDAKAVPEAPGTVECSKGLSQEPGAHLEEKKTPESSLSSQHLNELEKRPNPEKVVEEGREAGEMESSTLQESPRARAEAVLLHEMDEDDLANALIWPEIQQELKIIESEEELSSLPPPALKTSPIQPILESSLGPFIPSEPPGSLPCGSFPAPVSTPLEVWTRDPANQSTQGASTAASREKPEPEQGLHPDLASLAPLEIVPFEKASPQATVEVGGPGNLSPPLPPAPPPPTPLEESTPVLLSKGGPEREDSSRKLRTDLYIDQLKSQDSPEISSLCQGEEATPRHSDKQNSKNAASEGKGCGFPSPTREVEIVSQEEEDVTHSVQEPSDCDEDDTVTDIAQHGLEMVEPWEEPQWVTSPLHSPTLKDAHKAQVQGLQGHQLEKRLSHRPSLRQSHSLDSKPTVKSQWTLEVPSSSSCANLETERNSDPLQPQAPRREITGWDEKALRSFREFSGLKGAEAPPNQKGPSGVQPNPAETSPISLAEGKELGTHLGHSSPQIRQGGVPGPESSKESSPSVQDSTSPGEHPAKLQLKSTECGPPKGKNRPSSLNLDPAIPIADLFWFENVASFSSPGMQVSEPGDPKVTWMTSSYCKADPWRVYSQDPQDLDIVAHALTGRRNSAPVSVSAVRTSFMVKMCQARAVPVIPPKIQYTQIPQPLPSQSSGENGVQPLERSQEGPSSTSGTTQKPAKDDSPSSLESSKEEKPKQDPGAIKSSPVDATAPCMCEGPTLSPEPGSSNLLSTQDAVVQCRKRMSETEPSGDNLLSSKLERPSGGSKPFHRSRPGRPQSLILFSPPFPIMDHLPPSSTVTDSKVLLSPIRSPTQTVSPGLLCGELAENTWVTPEGVTLRNKMTIPKNGQRLETSTSCFYQPQRRSVILDGRSGRQIE</sequence>
<feature type="chain" id="PRO_0000320114" description="Rho GTPase-activating protein 31">
    <location>
        <begin position="1"/>
        <end position="1444"/>
    </location>
</feature>
<feature type="domain" description="Rho-GAP" evidence="3">
    <location>
        <begin position="21"/>
        <end position="216"/>
    </location>
</feature>
<feature type="region of interest" description="Disordered" evidence="4">
    <location>
        <begin position="398"/>
        <end position="427"/>
    </location>
</feature>
<feature type="region of interest" description="Disordered" evidence="4">
    <location>
        <begin position="504"/>
        <end position="631"/>
    </location>
</feature>
<feature type="region of interest" description="Disordered" evidence="4">
    <location>
        <begin position="688"/>
        <end position="893"/>
    </location>
</feature>
<feature type="region of interest" description="Disordered" evidence="4">
    <location>
        <begin position="906"/>
        <end position="1108"/>
    </location>
</feature>
<feature type="region of interest" description="Disordered" evidence="4">
    <location>
        <begin position="1211"/>
        <end position="1346"/>
    </location>
</feature>
<feature type="compositionally biased region" description="Low complexity" evidence="4">
    <location>
        <begin position="515"/>
        <end position="534"/>
    </location>
</feature>
<feature type="compositionally biased region" description="Basic and acidic residues" evidence="4">
    <location>
        <begin position="600"/>
        <end position="619"/>
    </location>
</feature>
<feature type="compositionally biased region" description="Polar residues" evidence="4">
    <location>
        <begin position="722"/>
        <end position="734"/>
    </location>
</feature>
<feature type="compositionally biased region" description="Basic and acidic residues" evidence="4">
    <location>
        <begin position="735"/>
        <end position="745"/>
    </location>
</feature>
<feature type="compositionally biased region" description="Pro residues" evidence="4">
    <location>
        <begin position="777"/>
        <end position="790"/>
    </location>
</feature>
<feature type="compositionally biased region" description="Basic and acidic residues" evidence="4">
    <location>
        <begin position="803"/>
        <end position="817"/>
    </location>
</feature>
<feature type="compositionally biased region" description="Polar residues" evidence="4">
    <location>
        <begin position="822"/>
        <end position="834"/>
    </location>
</feature>
<feature type="compositionally biased region" description="Basic and acidic residues" evidence="4">
    <location>
        <begin position="839"/>
        <end position="848"/>
    </location>
</feature>
<feature type="compositionally biased region" description="Polar residues" evidence="4">
    <location>
        <begin position="960"/>
        <end position="977"/>
    </location>
</feature>
<feature type="compositionally biased region" description="Basic and acidic residues" evidence="4">
    <location>
        <begin position="992"/>
        <end position="1008"/>
    </location>
</feature>
<feature type="compositionally biased region" description="Polar residues" evidence="4">
    <location>
        <begin position="1028"/>
        <end position="1038"/>
    </location>
</feature>
<feature type="compositionally biased region" description="Low complexity" evidence="4">
    <location>
        <begin position="1064"/>
        <end position="1075"/>
    </location>
</feature>
<feature type="compositionally biased region" description="Polar residues" evidence="4">
    <location>
        <begin position="1211"/>
        <end position="1224"/>
    </location>
</feature>
<feature type="compositionally biased region" description="Polar residues" evidence="4">
    <location>
        <begin position="1234"/>
        <end position="1245"/>
    </location>
</feature>
<feature type="compositionally biased region" description="Basic and acidic residues" evidence="4">
    <location>
        <begin position="1246"/>
        <end position="1265"/>
    </location>
</feature>
<feature type="compositionally biased region" description="Polar residues" evidence="4">
    <location>
        <begin position="1292"/>
        <end position="1303"/>
    </location>
</feature>
<feature type="compositionally biased region" description="Polar residues" evidence="4">
    <location>
        <begin position="1314"/>
        <end position="1323"/>
    </location>
</feature>
<feature type="site" description="Arginine finger; crucial for GTP hydrolysis by stabilizing the transition state" evidence="3">
    <location>
        <position position="56"/>
    </location>
</feature>
<feature type="modified residue" description="Phosphoserine" evidence="2">
    <location>
        <position position="272"/>
    </location>
</feature>
<feature type="modified residue" description="Phosphothreonine" evidence="2">
    <location>
        <position position="286"/>
    </location>
</feature>
<feature type="modified residue" description="Phosphoserine" evidence="2">
    <location>
        <position position="346"/>
    </location>
</feature>
<feature type="modified residue" description="Phosphoserine" evidence="2">
    <location>
        <position position="349"/>
    </location>
</feature>
<feature type="modified residue" description="Phosphoserine" evidence="2">
    <location>
        <position position="387"/>
    </location>
</feature>
<feature type="modified residue" description="Phosphoserine" evidence="2">
    <location>
        <position position="476"/>
    </location>
</feature>
<feature type="modified residue" description="Phosphothreonine" evidence="2">
    <location>
        <position position="679"/>
    </location>
</feature>
<feature type="modified residue" description="Phosphoserine" evidence="2">
    <location>
        <position position="701"/>
    </location>
</feature>
<feature type="modified residue" description="Phosphoserine" evidence="2">
    <location>
        <position position="712"/>
    </location>
</feature>
<feature type="modified residue" description="Phosphoserine" evidence="2">
    <location>
        <position position="778"/>
    </location>
</feature>
<feature type="modified residue" description="Phosphothreonine" evidence="2">
    <location>
        <position position="789"/>
    </location>
</feature>
<feature type="modified residue" description="Phosphoserine" evidence="2">
    <location>
        <position position="974"/>
    </location>
</feature>
<feature type="modified residue" description="Phosphoserine" evidence="2">
    <location>
        <position position="1105"/>
    </location>
</feature>
<feature type="modified residue" description="Phosphoserine" evidence="2">
    <location>
        <position position="1106"/>
    </location>
</feature>
<feature type="modified residue" description="Phosphoserine" evidence="2">
    <location>
        <position position="1178"/>
    </location>
</feature>
<feature type="sequence variant" id="VAR_039122" description="In dbSNP:rs751793.">
    <original>P</original>
    <variation>L</variation>
    <location>
        <position position="221"/>
    </location>
</feature>
<feature type="sequence variant" id="VAR_065919" description="In dbSNP:rs539048828." evidence="10">
    <original>T</original>
    <variation>I</variation>
    <location>
        <position position="727"/>
    </location>
</feature>
<feature type="sequence variant" id="VAR_039123" description="In dbSNP:rs3732413." evidence="5 7">
    <original>G</original>
    <variation>S</variation>
    <location>
        <position position="803"/>
    </location>
</feature>
<feature type="sequence variant" id="VAR_039124" description="In dbSNP:rs12107254.">
    <original>I</original>
    <variation>L</variation>
    <location>
        <position position="1115"/>
    </location>
</feature>
<feature type="sequence variant" id="VAR_039125" description="In dbSNP:rs3796360.">
    <original>V</original>
    <variation>M</variation>
    <location>
        <position position="1366"/>
    </location>
</feature>
<feature type="sequence variant" id="VAR_039126" description="In dbSNP:rs9852894.">
    <original>T</original>
    <variation>I</variation>
    <location>
        <position position="1380"/>
    </location>
</feature>